<proteinExistence type="inferred from homology"/>
<dbReference type="EC" id="2.3.3.13" evidence="1"/>
<dbReference type="EMBL" id="CP000813">
    <property type="protein sequence ID" value="ABV63132.1"/>
    <property type="molecule type" value="Genomic_DNA"/>
</dbReference>
<dbReference type="RefSeq" id="WP_012010790.1">
    <property type="nucleotide sequence ID" value="NZ_VEIS01000010.1"/>
</dbReference>
<dbReference type="SMR" id="A8FFW5"/>
<dbReference type="STRING" id="315750.BPUM_2469"/>
<dbReference type="GeneID" id="5621733"/>
<dbReference type="KEGG" id="bpu:BPUM_2469"/>
<dbReference type="eggNOG" id="COG0119">
    <property type="taxonomic scope" value="Bacteria"/>
</dbReference>
<dbReference type="HOGENOM" id="CLU_022158_0_1_9"/>
<dbReference type="OrthoDB" id="9804858at2"/>
<dbReference type="UniPathway" id="UPA00048">
    <property type="reaction ID" value="UER00070"/>
</dbReference>
<dbReference type="Proteomes" id="UP000001355">
    <property type="component" value="Chromosome"/>
</dbReference>
<dbReference type="GO" id="GO:0005737">
    <property type="term" value="C:cytoplasm"/>
    <property type="evidence" value="ECO:0007669"/>
    <property type="project" value="UniProtKB-SubCell"/>
</dbReference>
<dbReference type="GO" id="GO:0003852">
    <property type="term" value="F:2-isopropylmalate synthase activity"/>
    <property type="evidence" value="ECO:0007669"/>
    <property type="project" value="UniProtKB-UniRule"/>
</dbReference>
<dbReference type="GO" id="GO:0003985">
    <property type="term" value="F:acetyl-CoA C-acetyltransferase activity"/>
    <property type="evidence" value="ECO:0007669"/>
    <property type="project" value="UniProtKB-UniRule"/>
</dbReference>
<dbReference type="GO" id="GO:0030145">
    <property type="term" value="F:manganese ion binding"/>
    <property type="evidence" value="ECO:0007669"/>
    <property type="project" value="UniProtKB-UniRule"/>
</dbReference>
<dbReference type="GO" id="GO:0009098">
    <property type="term" value="P:L-leucine biosynthetic process"/>
    <property type="evidence" value="ECO:0007669"/>
    <property type="project" value="UniProtKB-UniRule"/>
</dbReference>
<dbReference type="CDD" id="cd07940">
    <property type="entry name" value="DRE_TIM_IPMS"/>
    <property type="match status" value="1"/>
</dbReference>
<dbReference type="FunFam" id="1.10.238.260:FF:000001">
    <property type="entry name" value="2-isopropylmalate synthase"/>
    <property type="match status" value="1"/>
</dbReference>
<dbReference type="FunFam" id="3.20.20.70:FF:000010">
    <property type="entry name" value="2-isopropylmalate synthase"/>
    <property type="match status" value="1"/>
</dbReference>
<dbReference type="FunFam" id="3.30.160.270:FF:000003">
    <property type="entry name" value="2-isopropylmalate synthase"/>
    <property type="match status" value="1"/>
</dbReference>
<dbReference type="Gene3D" id="1.10.238.260">
    <property type="match status" value="1"/>
</dbReference>
<dbReference type="Gene3D" id="3.30.160.270">
    <property type="match status" value="1"/>
</dbReference>
<dbReference type="Gene3D" id="3.20.20.70">
    <property type="entry name" value="Aldolase class I"/>
    <property type="match status" value="1"/>
</dbReference>
<dbReference type="HAMAP" id="MF_01025">
    <property type="entry name" value="LeuA_type1"/>
    <property type="match status" value="1"/>
</dbReference>
<dbReference type="InterPro" id="IPR050073">
    <property type="entry name" value="2-IPM_HCS-like"/>
</dbReference>
<dbReference type="InterPro" id="IPR013709">
    <property type="entry name" value="2-isopropylmalate_synth_dimer"/>
</dbReference>
<dbReference type="InterPro" id="IPR002034">
    <property type="entry name" value="AIPM/Hcit_synth_CS"/>
</dbReference>
<dbReference type="InterPro" id="IPR013785">
    <property type="entry name" value="Aldolase_TIM"/>
</dbReference>
<dbReference type="InterPro" id="IPR054691">
    <property type="entry name" value="LeuA/HCS_post-cat"/>
</dbReference>
<dbReference type="InterPro" id="IPR036230">
    <property type="entry name" value="LeuA_allosteric_dom_sf"/>
</dbReference>
<dbReference type="InterPro" id="IPR005671">
    <property type="entry name" value="LeuA_bact_synth"/>
</dbReference>
<dbReference type="InterPro" id="IPR000891">
    <property type="entry name" value="PYR_CT"/>
</dbReference>
<dbReference type="NCBIfam" id="TIGR00973">
    <property type="entry name" value="leuA_bact"/>
    <property type="match status" value="1"/>
</dbReference>
<dbReference type="NCBIfam" id="NF002086">
    <property type="entry name" value="PRK00915.1-3"/>
    <property type="match status" value="1"/>
</dbReference>
<dbReference type="NCBIfam" id="NF002088">
    <property type="entry name" value="PRK00915.1-5"/>
    <property type="match status" value="1"/>
</dbReference>
<dbReference type="PANTHER" id="PTHR10277:SF9">
    <property type="entry name" value="2-ISOPROPYLMALATE SYNTHASE 1, CHLOROPLASTIC-RELATED"/>
    <property type="match status" value="1"/>
</dbReference>
<dbReference type="PANTHER" id="PTHR10277">
    <property type="entry name" value="HOMOCITRATE SYNTHASE-RELATED"/>
    <property type="match status" value="1"/>
</dbReference>
<dbReference type="Pfam" id="PF22617">
    <property type="entry name" value="HCS_D2"/>
    <property type="match status" value="1"/>
</dbReference>
<dbReference type="Pfam" id="PF00682">
    <property type="entry name" value="HMGL-like"/>
    <property type="match status" value="1"/>
</dbReference>
<dbReference type="Pfam" id="PF08502">
    <property type="entry name" value="LeuA_dimer"/>
    <property type="match status" value="1"/>
</dbReference>
<dbReference type="SMART" id="SM00917">
    <property type="entry name" value="LeuA_dimer"/>
    <property type="match status" value="1"/>
</dbReference>
<dbReference type="SUPFAM" id="SSF110921">
    <property type="entry name" value="2-isopropylmalate synthase LeuA, allosteric (dimerisation) domain"/>
    <property type="match status" value="1"/>
</dbReference>
<dbReference type="SUPFAM" id="SSF51569">
    <property type="entry name" value="Aldolase"/>
    <property type="match status" value="1"/>
</dbReference>
<dbReference type="PROSITE" id="PS00815">
    <property type="entry name" value="AIPM_HOMOCIT_SYNTH_1"/>
    <property type="match status" value="1"/>
</dbReference>
<dbReference type="PROSITE" id="PS00816">
    <property type="entry name" value="AIPM_HOMOCIT_SYNTH_2"/>
    <property type="match status" value="1"/>
</dbReference>
<dbReference type="PROSITE" id="PS50991">
    <property type="entry name" value="PYR_CT"/>
    <property type="match status" value="1"/>
</dbReference>
<evidence type="ECO:0000255" key="1">
    <source>
        <dbReference type="HAMAP-Rule" id="MF_01025"/>
    </source>
</evidence>
<reference key="1">
    <citation type="journal article" date="2007" name="PLoS ONE">
        <title>Paradoxical DNA repair and peroxide resistance gene conservation in Bacillus pumilus SAFR-032.</title>
        <authorList>
            <person name="Gioia J."/>
            <person name="Yerrapragada S."/>
            <person name="Qin X."/>
            <person name="Jiang H."/>
            <person name="Igboeli O.C."/>
            <person name="Muzny D."/>
            <person name="Dugan-Rocha S."/>
            <person name="Ding Y."/>
            <person name="Hawes A."/>
            <person name="Liu W."/>
            <person name="Perez L."/>
            <person name="Kovar C."/>
            <person name="Dinh H."/>
            <person name="Lee S."/>
            <person name="Nazareth L."/>
            <person name="Blyth P."/>
            <person name="Holder M."/>
            <person name="Buhay C."/>
            <person name="Tirumalai M.R."/>
            <person name="Liu Y."/>
            <person name="Dasgupta I."/>
            <person name="Bokhetache L."/>
            <person name="Fujita M."/>
            <person name="Karouia F."/>
            <person name="Eswara Moorthy P."/>
            <person name="Siefert J."/>
            <person name="Uzman A."/>
            <person name="Buzumbo P."/>
            <person name="Verma A."/>
            <person name="Zwiya H."/>
            <person name="McWilliams B.D."/>
            <person name="Olowu A."/>
            <person name="Clinkenbeard K.D."/>
            <person name="Newcombe D."/>
            <person name="Golebiewski L."/>
            <person name="Petrosino J.F."/>
            <person name="Nicholson W.L."/>
            <person name="Fox G.E."/>
            <person name="Venkateswaran K."/>
            <person name="Highlander S.K."/>
            <person name="Weinstock G.M."/>
        </authorList>
    </citation>
    <scope>NUCLEOTIDE SEQUENCE [LARGE SCALE GENOMIC DNA]</scope>
    <source>
        <strain>SAFR-032</strain>
    </source>
</reference>
<comment type="function">
    <text evidence="1">Catalyzes the condensation of the acetyl group of acetyl-CoA with 3-methyl-2-oxobutanoate (2-ketoisovalerate) to form 3-carboxy-3-hydroxy-4-methylpentanoate (2-isopropylmalate).</text>
</comment>
<comment type="catalytic activity">
    <reaction evidence="1">
        <text>3-methyl-2-oxobutanoate + acetyl-CoA + H2O = (2S)-2-isopropylmalate + CoA + H(+)</text>
        <dbReference type="Rhea" id="RHEA:21524"/>
        <dbReference type="ChEBI" id="CHEBI:1178"/>
        <dbReference type="ChEBI" id="CHEBI:11851"/>
        <dbReference type="ChEBI" id="CHEBI:15377"/>
        <dbReference type="ChEBI" id="CHEBI:15378"/>
        <dbReference type="ChEBI" id="CHEBI:57287"/>
        <dbReference type="ChEBI" id="CHEBI:57288"/>
        <dbReference type="EC" id="2.3.3.13"/>
    </reaction>
</comment>
<comment type="cofactor">
    <cofactor evidence="1">
        <name>Mn(2+)</name>
        <dbReference type="ChEBI" id="CHEBI:29035"/>
    </cofactor>
</comment>
<comment type="pathway">
    <text evidence="1">Amino-acid biosynthesis; L-leucine biosynthesis; L-leucine from 3-methyl-2-oxobutanoate: step 1/4.</text>
</comment>
<comment type="subunit">
    <text evidence="1">Homodimer.</text>
</comment>
<comment type="subcellular location">
    <subcellularLocation>
        <location evidence="1">Cytoplasm</location>
    </subcellularLocation>
</comment>
<comment type="similarity">
    <text evidence="1">Belongs to the alpha-IPM synthase/homocitrate synthase family. LeuA type 1 subfamily.</text>
</comment>
<protein>
    <recommendedName>
        <fullName evidence="1">2-isopropylmalate synthase</fullName>
        <ecNumber evidence="1">2.3.3.13</ecNumber>
    </recommendedName>
    <alternativeName>
        <fullName evidence="1">Alpha-IPM synthase</fullName>
    </alternativeName>
    <alternativeName>
        <fullName evidence="1">Alpha-isopropylmalate synthase</fullName>
    </alternativeName>
</protein>
<organism>
    <name type="scientific">Bacillus pumilus (strain SAFR-032)</name>
    <dbReference type="NCBI Taxonomy" id="315750"/>
    <lineage>
        <taxon>Bacteria</taxon>
        <taxon>Bacillati</taxon>
        <taxon>Bacillota</taxon>
        <taxon>Bacilli</taxon>
        <taxon>Bacillales</taxon>
        <taxon>Bacillaceae</taxon>
        <taxon>Bacillus</taxon>
    </lineage>
</organism>
<feature type="chain" id="PRO_1000149137" description="2-isopropylmalate synthase">
    <location>
        <begin position="1"/>
        <end position="517"/>
    </location>
</feature>
<feature type="domain" description="Pyruvate carboxyltransferase" evidence="1">
    <location>
        <begin position="4"/>
        <end position="266"/>
    </location>
</feature>
<feature type="region of interest" description="Regulatory domain" evidence="1">
    <location>
        <begin position="391"/>
        <end position="517"/>
    </location>
</feature>
<feature type="binding site" evidence="1">
    <location>
        <position position="13"/>
    </location>
    <ligand>
        <name>Mn(2+)</name>
        <dbReference type="ChEBI" id="CHEBI:29035"/>
    </ligand>
</feature>
<feature type="binding site" evidence="1">
    <location>
        <position position="201"/>
    </location>
    <ligand>
        <name>Mn(2+)</name>
        <dbReference type="ChEBI" id="CHEBI:29035"/>
    </ligand>
</feature>
<feature type="binding site" evidence="1">
    <location>
        <position position="203"/>
    </location>
    <ligand>
        <name>Mn(2+)</name>
        <dbReference type="ChEBI" id="CHEBI:29035"/>
    </ligand>
</feature>
<feature type="binding site" evidence="1">
    <location>
        <position position="237"/>
    </location>
    <ligand>
        <name>Mn(2+)</name>
        <dbReference type="ChEBI" id="CHEBI:29035"/>
    </ligand>
</feature>
<gene>
    <name evidence="1" type="primary">leuA</name>
    <name type="ordered locus">BPUM_2469</name>
</gene>
<accession>A8FFW5</accession>
<name>LEU1_BACP2</name>
<sequence length="517" mass="57349">MRKINFFDTTLRDGEQSPGVNLNAQEKLIIAKQLERLGVNIIEAGFPASSRGDFLGVQEIARTIKNCSVAGLARCVKGDIDAAWEALKDGVEPRLHVFIATSDIHLKHKLKKTREEVVEQAVAMVKYAKERFPVVQWSAEDACRTDLDFLAEIVEKVIDAGASVINLPDTVGYLAPKEYGNIFKYMKEHVPNIDRVNLSAHCHDDLGMAVANSLAAIENGADQIETAVNGIGERAGNAALEEIAVALHIRKDFYQVESTIQLNEIKRTSDVVSKYSGMIVPRNKAVVGNNAFAHESGIHQDGFLKEKTTYEIISPELVGVTTDVLVLGKHSGRHAFKDRMKTLGFKLTEEEINKFFETFKNLTEKKKEITDDDLISIILEEKVADRKIGYEFESLQVHYGTEQMPTATVSLKNQETQEVIQEAATGAGSVEAVYNTLERCMEERIHLLDYRIQSNGKGRDALAEVYVTVSIEGKETAGRGVAQDVLEASAKAYVNAVNRHLIFKSNLIEIEKHHAIS</sequence>
<keyword id="KW-0028">Amino-acid biosynthesis</keyword>
<keyword id="KW-0100">Branched-chain amino acid biosynthesis</keyword>
<keyword id="KW-0963">Cytoplasm</keyword>
<keyword id="KW-0432">Leucine biosynthesis</keyword>
<keyword id="KW-0464">Manganese</keyword>
<keyword id="KW-0479">Metal-binding</keyword>
<keyword id="KW-0808">Transferase</keyword>